<name>LGI1_BOVIN</name>
<gene>
    <name type="primary">LGI1</name>
</gene>
<proteinExistence type="evidence at transcript level"/>
<dbReference type="EMBL" id="BT020834">
    <property type="protein sequence ID" value="AAX08851.1"/>
    <property type="molecule type" value="mRNA"/>
</dbReference>
<dbReference type="RefSeq" id="NP_001040056.2">
    <property type="nucleotide sequence ID" value="NM_001046591.2"/>
</dbReference>
<dbReference type="SMR" id="Q5E9T6"/>
<dbReference type="FunCoup" id="Q5E9T6">
    <property type="interactions" value="990"/>
</dbReference>
<dbReference type="STRING" id="9913.ENSBTAP00000006728"/>
<dbReference type="GlyCosmos" id="Q5E9T6">
    <property type="glycosylation" value="3 sites, No reported glycans"/>
</dbReference>
<dbReference type="GlyGen" id="Q5E9T6">
    <property type="glycosylation" value="3 sites"/>
</dbReference>
<dbReference type="PaxDb" id="9913-ENSBTAP00000006728"/>
<dbReference type="Ensembl" id="ENSBTAT00000006728.5">
    <property type="protein sequence ID" value="ENSBTAP00000006728.5"/>
    <property type="gene ID" value="ENSBTAG00000005106.6"/>
</dbReference>
<dbReference type="GeneID" id="617080"/>
<dbReference type="KEGG" id="bta:617080"/>
<dbReference type="CTD" id="9211"/>
<dbReference type="VEuPathDB" id="HostDB:ENSBTAG00000005106"/>
<dbReference type="eggNOG" id="ENOG502REXX">
    <property type="taxonomic scope" value="Eukaryota"/>
</dbReference>
<dbReference type="GeneTree" id="ENSGT00940000159793"/>
<dbReference type="InParanoid" id="Q5E9T6"/>
<dbReference type="OMA" id="VEMNFRN"/>
<dbReference type="OrthoDB" id="6066926at2759"/>
<dbReference type="Reactome" id="R-BTA-5682910">
    <property type="pathway name" value="LGI-ADAM interactions"/>
</dbReference>
<dbReference type="Proteomes" id="UP000009136">
    <property type="component" value="Chromosome 26"/>
</dbReference>
<dbReference type="Bgee" id="ENSBTAG00000005106">
    <property type="expression patterns" value="Expressed in occipital lobe and 83 other cell types or tissues"/>
</dbReference>
<dbReference type="GO" id="GO:0005737">
    <property type="term" value="C:cytoplasm"/>
    <property type="evidence" value="ECO:0000250"/>
    <property type="project" value="UniProtKB"/>
</dbReference>
<dbReference type="GO" id="GO:0005615">
    <property type="term" value="C:extracellular space"/>
    <property type="evidence" value="ECO:0000250"/>
    <property type="project" value="UniProtKB"/>
</dbReference>
<dbReference type="GO" id="GO:0045202">
    <property type="term" value="C:synapse"/>
    <property type="evidence" value="ECO:0007669"/>
    <property type="project" value="UniProtKB-SubCell"/>
</dbReference>
<dbReference type="GO" id="GO:0048018">
    <property type="term" value="F:receptor ligand activity"/>
    <property type="evidence" value="ECO:0000250"/>
    <property type="project" value="UniProtKB"/>
</dbReference>
<dbReference type="GO" id="GO:0050806">
    <property type="term" value="P:positive regulation of synaptic transmission"/>
    <property type="evidence" value="ECO:0000250"/>
    <property type="project" value="UniProtKB"/>
</dbReference>
<dbReference type="FunFam" id="3.80.10.10:FF:000017">
    <property type="entry name" value="leucine-rich repeat LGI family member 3"/>
    <property type="match status" value="1"/>
</dbReference>
<dbReference type="Gene3D" id="3.80.10.10">
    <property type="entry name" value="Ribonuclease Inhibitor"/>
    <property type="match status" value="1"/>
</dbReference>
<dbReference type="InterPro" id="IPR000483">
    <property type="entry name" value="Cys-rich_flank_reg_C"/>
</dbReference>
<dbReference type="InterPro" id="IPR009039">
    <property type="entry name" value="EAR"/>
</dbReference>
<dbReference type="InterPro" id="IPR005492">
    <property type="entry name" value="EPTP"/>
</dbReference>
<dbReference type="InterPro" id="IPR001611">
    <property type="entry name" value="Leu-rich_rpt"/>
</dbReference>
<dbReference type="InterPro" id="IPR003591">
    <property type="entry name" value="Leu-rich_rpt_typical-subtyp"/>
</dbReference>
<dbReference type="InterPro" id="IPR051295">
    <property type="entry name" value="LGI_related"/>
</dbReference>
<dbReference type="InterPro" id="IPR032675">
    <property type="entry name" value="LRR_dom_sf"/>
</dbReference>
<dbReference type="PANTHER" id="PTHR24367:SF17">
    <property type="entry name" value="LEUCINE-RICH GLIOMA-INACTIVATED PROTEIN 1"/>
    <property type="match status" value="1"/>
</dbReference>
<dbReference type="PANTHER" id="PTHR24367">
    <property type="entry name" value="LEUCINE-RICH REPEAT-CONTAINING PROTEIN"/>
    <property type="match status" value="1"/>
</dbReference>
<dbReference type="Pfam" id="PF03736">
    <property type="entry name" value="EPTP"/>
    <property type="match status" value="7"/>
</dbReference>
<dbReference type="Pfam" id="PF13855">
    <property type="entry name" value="LRR_8"/>
    <property type="match status" value="1"/>
</dbReference>
<dbReference type="SMART" id="SM00369">
    <property type="entry name" value="LRR_TYP"/>
    <property type="match status" value="2"/>
</dbReference>
<dbReference type="SMART" id="SM00082">
    <property type="entry name" value="LRRCT"/>
    <property type="match status" value="1"/>
</dbReference>
<dbReference type="SUPFAM" id="SSF52058">
    <property type="entry name" value="L domain-like"/>
    <property type="match status" value="1"/>
</dbReference>
<dbReference type="PROSITE" id="PS50912">
    <property type="entry name" value="EAR"/>
    <property type="match status" value="7"/>
</dbReference>
<protein>
    <recommendedName>
        <fullName>Leucine-rich glioma-inactivated protein 1</fullName>
    </recommendedName>
</protein>
<comment type="function">
    <text evidence="1">Regulates voltage-gated potassium channels assembled from KCNA1, KCNA4 and KCNAB1. It slows down channel inactivation by precluding channel closure mediated by the KCNAB1 subunit. Ligand for ADAM22 that positively regulates synaptic transmission mediated by AMPA-type glutamate receptors. Plays a role in suppressing the production of MMP1/3 through the phosphatidylinositol 3-kinase/ERK pathway (By similarity).</text>
</comment>
<comment type="subunit">
    <text evidence="1">Oligomer. Interacts with KCNA1 within a complex containing KCNA1, KCNA4 and KCNAB1. Part of a complex containing ADAM22, DLG4/PSD95 and CACNG2 (stargazin). Can bind to ADAM11 and ADAM23.</text>
</comment>
<comment type="subcellular location">
    <subcellularLocation>
        <location evidence="3">Secreted</location>
    </subcellularLocation>
    <subcellularLocation>
        <location evidence="2">Synapse</location>
    </subcellularLocation>
    <subcellularLocation>
        <location evidence="3">Cytoplasm</location>
    </subcellularLocation>
</comment>
<comment type="PTM">
    <text evidence="1">Glycosylated.</text>
</comment>
<keyword id="KW-0963">Cytoplasm</keyword>
<keyword id="KW-0325">Glycoprotein</keyword>
<keyword id="KW-0433">Leucine-rich repeat</keyword>
<keyword id="KW-1185">Reference proteome</keyword>
<keyword id="KW-0677">Repeat</keyword>
<keyword id="KW-0964">Secreted</keyword>
<keyword id="KW-0732">Signal</keyword>
<keyword id="KW-0770">Synapse</keyword>
<evidence type="ECO:0000250" key="1"/>
<evidence type="ECO:0000250" key="2">
    <source>
        <dbReference type="UniProtKB" id="Q8K4Y5"/>
    </source>
</evidence>
<evidence type="ECO:0000250" key="3">
    <source>
        <dbReference type="UniProtKB" id="Q9JIA1"/>
    </source>
</evidence>
<evidence type="ECO:0000255" key="4"/>
<evidence type="ECO:0000255" key="5">
    <source>
        <dbReference type="PROSITE-ProRule" id="PRU00075"/>
    </source>
</evidence>
<accession>Q5E9T6</accession>
<sequence length="533" mass="61161">MESERSQRMGNACIPLKRIAYCLCLLSALLLTEGKKPAKPKCPAVCTCTKDNALCENARSIPRTVPPDVISLLFTSNSFDVISDDAFIGLPHLEYLFIENNNIKSISRHTFRGLKSLIHLSLANNNLQTLPKDIFKGLDSLTNVDLRGNSFNCDCKLKWLVEWLSHTNATVEDIYCEGPPEYKKRKINSLSSKDFDCIITEFAKSQDLPYQSLSIDTFSYMNDEYVVIAQPFTGKCIFLEWDHVEKTFRNYDNITGTSTVVCKPIVIETQLYVIVAQLFGGSHIYKRDSFANKFIKIQDIEILKIRKPNDIETFKIENNWYFVVADSSKAGFTTIYKWNGNGFYSHQSLHAWYRDTDVEYLEIARTPQTLRTPHLILSSSSQRPVIYQWNKAIQLFTNQTDIPNMEDVYAVKHFSVKGDVYICLTRFIGDSKVMKWGGSSFQDIQRMPSRGSMVFQPLQINNYQYAILGSDYSFTQVYNWDAEKAKFVKFQELNVQAPRSFTHVSINKRNFLFASSFKGNTQIYKHVIVDLSA</sequence>
<organism>
    <name type="scientific">Bos taurus</name>
    <name type="common">Bovine</name>
    <dbReference type="NCBI Taxonomy" id="9913"/>
    <lineage>
        <taxon>Eukaryota</taxon>
        <taxon>Metazoa</taxon>
        <taxon>Chordata</taxon>
        <taxon>Craniata</taxon>
        <taxon>Vertebrata</taxon>
        <taxon>Euteleostomi</taxon>
        <taxon>Mammalia</taxon>
        <taxon>Eutheria</taxon>
        <taxon>Laurasiatheria</taxon>
        <taxon>Artiodactyla</taxon>
        <taxon>Ruminantia</taxon>
        <taxon>Pecora</taxon>
        <taxon>Bovidae</taxon>
        <taxon>Bovinae</taxon>
        <taxon>Bos</taxon>
    </lineage>
</organism>
<feature type="signal peptide" evidence="4">
    <location>
        <begin position="1"/>
        <end position="34"/>
    </location>
</feature>
<feature type="chain" id="PRO_0000251154" description="Leucine-rich glioma-inactivated protein 1">
    <location>
        <begin position="35"/>
        <end position="533"/>
    </location>
</feature>
<feature type="domain" description="LRRNT">
    <location>
        <begin position="35"/>
        <end position="72"/>
    </location>
</feature>
<feature type="repeat" description="LRR 1">
    <location>
        <begin position="92"/>
        <end position="113"/>
    </location>
</feature>
<feature type="repeat" description="LRR 2">
    <location>
        <begin position="116"/>
        <end position="137"/>
    </location>
</feature>
<feature type="domain" description="LRRCT">
    <location>
        <begin position="149"/>
        <end position="199"/>
    </location>
</feature>
<feature type="repeat" description="EAR 1" evidence="5">
    <location>
        <begin position="201"/>
        <end position="243"/>
    </location>
</feature>
<feature type="repeat" description="EAR 2" evidence="5">
    <location>
        <begin position="247"/>
        <end position="289"/>
    </location>
</feature>
<feature type="repeat" description="EAR 3" evidence="5">
    <location>
        <begin position="293"/>
        <end position="340"/>
    </location>
</feature>
<feature type="repeat" description="EAR 4" evidence="5">
    <location>
        <begin position="342"/>
        <end position="391"/>
    </location>
</feature>
<feature type="repeat" description="EAR 5" evidence="5">
    <location>
        <begin position="395"/>
        <end position="438"/>
    </location>
</feature>
<feature type="repeat" description="EAR 6" evidence="5">
    <location>
        <begin position="440"/>
        <end position="482"/>
    </location>
</feature>
<feature type="repeat" description="EAR 7" evidence="5">
    <location>
        <begin position="486"/>
        <end position="528"/>
    </location>
</feature>
<feature type="glycosylation site" description="N-linked (GlcNAc...) asparagine" evidence="4">
    <location>
        <position position="168"/>
    </location>
</feature>
<feature type="glycosylation site" description="N-linked (GlcNAc...) asparagine" evidence="4">
    <location>
        <position position="253"/>
    </location>
</feature>
<feature type="glycosylation site" description="N-linked (GlcNAc...) asparagine" evidence="4">
    <location>
        <position position="398"/>
    </location>
</feature>
<reference key="1">
    <citation type="journal article" date="2005" name="BMC Genomics">
        <title>Characterization of 954 bovine full-CDS cDNA sequences.</title>
        <authorList>
            <person name="Harhay G.P."/>
            <person name="Sonstegard T.S."/>
            <person name="Keele J.W."/>
            <person name="Heaton M.P."/>
            <person name="Clawson M.L."/>
            <person name="Snelling W.M."/>
            <person name="Wiedmann R.T."/>
            <person name="Van Tassell C.P."/>
            <person name="Smith T.P.L."/>
        </authorList>
    </citation>
    <scope>NUCLEOTIDE SEQUENCE [LARGE SCALE MRNA]</scope>
</reference>